<feature type="chain" id="PRO_1000063266" description="ATP phosphoribosyltransferase">
    <location>
        <begin position="1"/>
        <end position="231"/>
    </location>
</feature>
<keyword id="KW-0028">Amino-acid biosynthesis</keyword>
<keyword id="KW-0067">ATP-binding</keyword>
<keyword id="KW-0963">Cytoplasm</keyword>
<keyword id="KW-0328">Glycosyltransferase</keyword>
<keyword id="KW-0368">Histidine biosynthesis</keyword>
<keyword id="KW-0547">Nucleotide-binding</keyword>
<keyword id="KW-0808">Transferase</keyword>
<sequence>MSVTLALPSKGRLKEKTLAVLEKAGYKVVLPDDDRNYRARVEGEDDLDILFLSASEIARELGYGSVDLGVTGEDLVRETLAHADERVAIEAQLGFGHADVVVAVPEVWRDVTTMADLDDVAADFRQRHGRRLRIATKYWRLTQQFFSQKHGIQVYRIVESLGATEGAPAAGSADMIVDITSTGSTLRANRLKVLEDGIIRRSQACLVSARRSHTSRRVEEIAARIRAGLEI</sequence>
<protein>
    <recommendedName>
        <fullName evidence="1">ATP phosphoribosyltransferase</fullName>
        <shortName evidence="1">ATP-PRT</shortName>
        <shortName evidence="1">ATP-PRTase</shortName>
        <ecNumber evidence="1">2.4.2.17</ecNumber>
    </recommendedName>
</protein>
<name>HIS1_BRUO2</name>
<reference key="1">
    <citation type="journal article" date="2009" name="PLoS ONE">
        <title>Genome degradation in Brucella ovis corresponds with narrowing of its host range and tissue tropism.</title>
        <authorList>
            <person name="Tsolis R.M."/>
            <person name="Seshadri R."/>
            <person name="Santos R.L."/>
            <person name="Sangari F.J."/>
            <person name="Lobo J.M."/>
            <person name="de Jong M.F."/>
            <person name="Ren Q."/>
            <person name="Myers G."/>
            <person name="Brinkac L.M."/>
            <person name="Nelson W.C."/>
            <person name="Deboy R.T."/>
            <person name="Angiuoli S."/>
            <person name="Khouri H."/>
            <person name="Dimitrov G."/>
            <person name="Robinson J.R."/>
            <person name="Mulligan S."/>
            <person name="Walker R.L."/>
            <person name="Elzer P.E."/>
            <person name="Hassan K.A."/>
            <person name="Paulsen I.T."/>
        </authorList>
    </citation>
    <scope>NUCLEOTIDE SEQUENCE [LARGE SCALE GENOMIC DNA]</scope>
    <source>
        <strain>ATCC 25840 / 63/290 / NCTC 10512</strain>
    </source>
</reference>
<comment type="function">
    <text evidence="1">Catalyzes the condensation of ATP and 5-phosphoribose 1-diphosphate to form N'-(5'-phosphoribosyl)-ATP (PR-ATP). Has a crucial role in the pathway because the rate of histidine biosynthesis seems to be controlled primarily by regulation of HisG enzymatic activity.</text>
</comment>
<comment type="catalytic activity">
    <reaction evidence="1">
        <text>1-(5-phospho-beta-D-ribosyl)-ATP + diphosphate = 5-phospho-alpha-D-ribose 1-diphosphate + ATP</text>
        <dbReference type="Rhea" id="RHEA:18473"/>
        <dbReference type="ChEBI" id="CHEBI:30616"/>
        <dbReference type="ChEBI" id="CHEBI:33019"/>
        <dbReference type="ChEBI" id="CHEBI:58017"/>
        <dbReference type="ChEBI" id="CHEBI:73183"/>
        <dbReference type="EC" id="2.4.2.17"/>
    </reaction>
</comment>
<comment type="pathway">
    <text evidence="1">Amino-acid biosynthesis; L-histidine biosynthesis; L-histidine from 5-phospho-alpha-D-ribose 1-diphosphate: step 1/9.</text>
</comment>
<comment type="subunit">
    <text evidence="1">Heteromultimer composed of HisG and HisZ subunits.</text>
</comment>
<comment type="subcellular location">
    <subcellularLocation>
        <location evidence="1">Cytoplasm</location>
    </subcellularLocation>
</comment>
<comment type="domain">
    <text>Lacks the C-terminal regulatory region which is replaced by HisZ.</text>
</comment>
<comment type="similarity">
    <text evidence="1">Belongs to the ATP phosphoribosyltransferase family. Short subfamily.</text>
</comment>
<accession>A5VTT6</accession>
<proteinExistence type="inferred from homology"/>
<dbReference type="EC" id="2.4.2.17" evidence="1"/>
<dbReference type="EMBL" id="CP000709">
    <property type="protein sequence ID" value="ABQ62557.1"/>
    <property type="molecule type" value="Genomic_DNA"/>
</dbReference>
<dbReference type="RefSeq" id="WP_006015177.1">
    <property type="nucleotide sequence ID" value="NC_009504.1"/>
</dbReference>
<dbReference type="SMR" id="A5VTT6"/>
<dbReference type="GeneID" id="45125588"/>
<dbReference type="KEGG" id="bov:BOV_A0171"/>
<dbReference type="HOGENOM" id="CLU_038115_0_1_5"/>
<dbReference type="PhylomeDB" id="A5VTT6"/>
<dbReference type="UniPathway" id="UPA00031">
    <property type="reaction ID" value="UER00006"/>
</dbReference>
<dbReference type="Proteomes" id="UP000006383">
    <property type="component" value="Chromosome II"/>
</dbReference>
<dbReference type="GO" id="GO:0005737">
    <property type="term" value="C:cytoplasm"/>
    <property type="evidence" value="ECO:0007669"/>
    <property type="project" value="UniProtKB-SubCell"/>
</dbReference>
<dbReference type="GO" id="GO:0005524">
    <property type="term" value="F:ATP binding"/>
    <property type="evidence" value="ECO:0007669"/>
    <property type="project" value="UniProtKB-KW"/>
</dbReference>
<dbReference type="GO" id="GO:0003879">
    <property type="term" value="F:ATP phosphoribosyltransferase activity"/>
    <property type="evidence" value="ECO:0007669"/>
    <property type="project" value="UniProtKB-UniRule"/>
</dbReference>
<dbReference type="GO" id="GO:0000105">
    <property type="term" value="P:L-histidine biosynthetic process"/>
    <property type="evidence" value="ECO:0007669"/>
    <property type="project" value="UniProtKB-UniRule"/>
</dbReference>
<dbReference type="CDD" id="cd13593">
    <property type="entry name" value="PBP2_HisGL3"/>
    <property type="match status" value="1"/>
</dbReference>
<dbReference type="Gene3D" id="3.40.190.10">
    <property type="entry name" value="Periplasmic binding protein-like II"/>
    <property type="match status" value="2"/>
</dbReference>
<dbReference type="HAMAP" id="MF_01018">
    <property type="entry name" value="HisG_Short"/>
    <property type="match status" value="1"/>
</dbReference>
<dbReference type="InterPro" id="IPR013820">
    <property type="entry name" value="ATP_PRibTrfase_cat"/>
</dbReference>
<dbReference type="InterPro" id="IPR018198">
    <property type="entry name" value="ATP_PRibTrfase_CS"/>
</dbReference>
<dbReference type="InterPro" id="IPR001348">
    <property type="entry name" value="ATP_PRibTrfase_HisG"/>
</dbReference>
<dbReference type="InterPro" id="IPR024893">
    <property type="entry name" value="ATP_PRibTrfase_HisG_short"/>
</dbReference>
<dbReference type="NCBIfam" id="TIGR00070">
    <property type="entry name" value="hisG"/>
    <property type="match status" value="1"/>
</dbReference>
<dbReference type="PANTHER" id="PTHR21403:SF8">
    <property type="entry name" value="ATP PHOSPHORIBOSYLTRANSFERASE"/>
    <property type="match status" value="1"/>
</dbReference>
<dbReference type="PANTHER" id="PTHR21403">
    <property type="entry name" value="ATP PHOSPHORIBOSYLTRANSFERASE ATP-PRTASE"/>
    <property type="match status" value="1"/>
</dbReference>
<dbReference type="Pfam" id="PF01634">
    <property type="entry name" value="HisG"/>
    <property type="match status" value="1"/>
</dbReference>
<dbReference type="SUPFAM" id="SSF53850">
    <property type="entry name" value="Periplasmic binding protein-like II"/>
    <property type="match status" value="1"/>
</dbReference>
<dbReference type="PROSITE" id="PS01316">
    <property type="entry name" value="ATP_P_PHORIBOSYLTR"/>
    <property type="match status" value="1"/>
</dbReference>
<organism>
    <name type="scientific">Brucella ovis (strain ATCC 25840 / 63/290 / NCTC 10512)</name>
    <dbReference type="NCBI Taxonomy" id="444178"/>
    <lineage>
        <taxon>Bacteria</taxon>
        <taxon>Pseudomonadati</taxon>
        <taxon>Pseudomonadota</taxon>
        <taxon>Alphaproteobacteria</taxon>
        <taxon>Hyphomicrobiales</taxon>
        <taxon>Brucellaceae</taxon>
        <taxon>Brucella/Ochrobactrum group</taxon>
        <taxon>Brucella</taxon>
    </lineage>
</organism>
<gene>
    <name evidence="1" type="primary">hisG</name>
    <name type="ordered locus">BOV_A0171</name>
</gene>
<evidence type="ECO:0000255" key="1">
    <source>
        <dbReference type="HAMAP-Rule" id="MF_01018"/>
    </source>
</evidence>